<evidence type="ECO:0000255" key="1">
    <source>
        <dbReference type="HAMAP-Rule" id="MF_01315"/>
    </source>
</evidence>
<evidence type="ECO:0000256" key="2">
    <source>
        <dbReference type="SAM" id="MobiDB-lite"/>
    </source>
</evidence>
<evidence type="ECO:0000305" key="3"/>
<feature type="chain" id="PRO_1000214394" description="Small ribosomal subunit protein uS13">
    <location>
        <begin position="1"/>
        <end position="121"/>
    </location>
</feature>
<feature type="region of interest" description="Disordered" evidence="2">
    <location>
        <begin position="94"/>
        <end position="121"/>
    </location>
</feature>
<feature type="compositionally biased region" description="Basic residues" evidence="2">
    <location>
        <begin position="106"/>
        <end position="121"/>
    </location>
</feature>
<accession>C4KZM1</accession>
<gene>
    <name evidence="1" type="primary">rpsM</name>
    <name type="ordered locus">EAT1b_1608</name>
</gene>
<sequence length="121" mass="13876">MARIAGVDIPREKRIVISLTYIYGIGKTKAQEILKAANVSEETRTRDLTEDELNRIREAIDGIKVEGDLRREVSLNIKRLIEIGAYRGIRHRRSLPVRGQNTKNNSRTRKGPRRTVANKKK</sequence>
<keyword id="KW-0687">Ribonucleoprotein</keyword>
<keyword id="KW-0689">Ribosomal protein</keyword>
<keyword id="KW-0694">RNA-binding</keyword>
<keyword id="KW-0699">rRNA-binding</keyword>
<keyword id="KW-0820">tRNA-binding</keyword>
<proteinExistence type="inferred from homology"/>
<protein>
    <recommendedName>
        <fullName evidence="1">Small ribosomal subunit protein uS13</fullName>
    </recommendedName>
    <alternativeName>
        <fullName evidence="3">30S ribosomal protein S13</fullName>
    </alternativeName>
</protein>
<dbReference type="EMBL" id="CP001615">
    <property type="protein sequence ID" value="ACQ70534.1"/>
    <property type="molecule type" value="Genomic_DNA"/>
</dbReference>
<dbReference type="RefSeq" id="WP_012727653.1">
    <property type="nucleotide sequence ID" value="NZ_MOEL01000001.1"/>
</dbReference>
<dbReference type="SMR" id="C4KZM1"/>
<dbReference type="STRING" id="360911.EAT1b_1608"/>
<dbReference type="GeneID" id="94370768"/>
<dbReference type="KEGG" id="eat:EAT1b_1608"/>
<dbReference type="eggNOG" id="COG0099">
    <property type="taxonomic scope" value="Bacteria"/>
</dbReference>
<dbReference type="HOGENOM" id="CLU_103849_1_1_9"/>
<dbReference type="OrthoDB" id="9803610at2"/>
<dbReference type="Proteomes" id="UP000000716">
    <property type="component" value="Chromosome"/>
</dbReference>
<dbReference type="GO" id="GO:0005829">
    <property type="term" value="C:cytosol"/>
    <property type="evidence" value="ECO:0007669"/>
    <property type="project" value="TreeGrafter"/>
</dbReference>
<dbReference type="GO" id="GO:0015935">
    <property type="term" value="C:small ribosomal subunit"/>
    <property type="evidence" value="ECO:0007669"/>
    <property type="project" value="TreeGrafter"/>
</dbReference>
<dbReference type="GO" id="GO:0019843">
    <property type="term" value="F:rRNA binding"/>
    <property type="evidence" value="ECO:0007669"/>
    <property type="project" value="UniProtKB-UniRule"/>
</dbReference>
<dbReference type="GO" id="GO:0003735">
    <property type="term" value="F:structural constituent of ribosome"/>
    <property type="evidence" value="ECO:0007669"/>
    <property type="project" value="InterPro"/>
</dbReference>
<dbReference type="GO" id="GO:0000049">
    <property type="term" value="F:tRNA binding"/>
    <property type="evidence" value="ECO:0007669"/>
    <property type="project" value="UniProtKB-UniRule"/>
</dbReference>
<dbReference type="GO" id="GO:0006412">
    <property type="term" value="P:translation"/>
    <property type="evidence" value="ECO:0007669"/>
    <property type="project" value="UniProtKB-UniRule"/>
</dbReference>
<dbReference type="FunFam" id="1.10.8.50:FF:000001">
    <property type="entry name" value="30S ribosomal protein S13"/>
    <property type="match status" value="1"/>
</dbReference>
<dbReference type="FunFam" id="4.10.910.10:FF:000001">
    <property type="entry name" value="30S ribosomal protein S13"/>
    <property type="match status" value="1"/>
</dbReference>
<dbReference type="Gene3D" id="1.10.8.50">
    <property type="match status" value="1"/>
</dbReference>
<dbReference type="Gene3D" id="4.10.910.10">
    <property type="entry name" value="30s ribosomal protein s13, domain 2"/>
    <property type="match status" value="1"/>
</dbReference>
<dbReference type="HAMAP" id="MF_01315">
    <property type="entry name" value="Ribosomal_uS13"/>
    <property type="match status" value="1"/>
</dbReference>
<dbReference type="InterPro" id="IPR027437">
    <property type="entry name" value="Rbsml_uS13_C"/>
</dbReference>
<dbReference type="InterPro" id="IPR001892">
    <property type="entry name" value="Ribosomal_uS13"/>
</dbReference>
<dbReference type="InterPro" id="IPR010979">
    <property type="entry name" value="Ribosomal_uS13-like_H2TH"/>
</dbReference>
<dbReference type="InterPro" id="IPR019980">
    <property type="entry name" value="Ribosomal_uS13_bac-type"/>
</dbReference>
<dbReference type="InterPro" id="IPR018269">
    <property type="entry name" value="Ribosomal_uS13_CS"/>
</dbReference>
<dbReference type="NCBIfam" id="TIGR03631">
    <property type="entry name" value="uS13_bact"/>
    <property type="match status" value="1"/>
</dbReference>
<dbReference type="PANTHER" id="PTHR10871">
    <property type="entry name" value="30S RIBOSOMAL PROTEIN S13/40S RIBOSOMAL PROTEIN S18"/>
    <property type="match status" value="1"/>
</dbReference>
<dbReference type="PANTHER" id="PTHR10871:SF1">
    <property type="entry name" value="SMALL RIBOSOMAL SUBUNIT PROTEIN US13M"/>
    <property type="match status" value="1"/>
</dbReference>
<dbReference type="Pfam" id="PF00416">
    <property type="entry name" value="Ribosomal_S13"/>
    <property type="match status" value="1"/>
</dbReference>
<dbReference type="PIRSF" id="PIRSF002134">
    <property type="entry name" value="Ribosomal_S13"/>
    <property type="match status" value="1"/>
</dbReference>
<dbReference type="SUPFAM" id="SSF46946">
    <property type="entry name" value="S13-like H2TH domain"/>
    <property type="match status" value="1"/>
</dbReference>
<dbReference type="PROSITE" id="PS00646">
    <property type="entry name" value="RIBOSOMAL_S13_1"/>
    <property type="match status" value="1"/>
</dbReference>
<dbReference type="PROSITE" id="PS50159">
    <property type="entry name" value="RIBOSOMAL_S13_2"/>
    <property type="match status" value="1"/>
</dbReference>
<name>RS13_EXISA</name>
<reference key="1">
    <citation type="journal article" date="2011" name="J. Bacteriol.">
        <title>Complete genome sequence of the Thermophilic Bacterium Exiguobacterium sp. AT1b.</title>
        <authorList>
            <person name="Vishnivetskaya T.A."/>
            <person name="Lucas S."/>
            <person name="Copeland A."/>
            <person name="Lapidus A."/>
            <person name="Glavina del Rio T."/>
            <person name="Dalin E."/>
            <person name="Tice H."/>
            <person name="Bruce D.C."/>
            <person name="Goodwin L.A."/>
            <person name="Pitluck S."/>
            <person name="Saunders E."/>
            <person name="Brettin T."/>
            <person name="Detter C."/>
            <person name="Han C."/>
            <person name="Larimer F."/>
            <person name="Land M.L."/>
            <person name="Hauser L.J."/>
            <person name="Kyrpides N.C."/>
            <person name="Ovchinnikova G."/>
            <person name="Kathariou S."/>
            <person name="Ramaley R.F."/>
            <person name="Rodrigues D.F."/>
            <person name="Hendrix C."/>
            <person name="Richardson P."/>
            <person name="Tiedje J.M."/>
        </authorList>
    </citation>
    <scope>NUCLEOTIDE SEQUENCE [LARGE SCALE GENOMIC DNA]</scope>
    <source>
        <strain>ATCC BAA-1283 / AT1b</strain>
    </source>
</reference>
<organism>
    <name type="scientific">Exiguobacterium sp. (strain ATCC BAA-1283 / AT1b)</name>
    <dbReference type="NCBI Taxonomy" id="360911"/>
    <lineage>
        <taxon>Bacteria</taxon>
        <taxon>Bacillati</taxon>
        <taxon>Bacillota</taxon>
        <taxon>Bacilli</taxon>
        <taxon>Bacillales</taxon>
        <taxon>Bacillales Family XII. Incertae Sedis</taxon>
        <taxon>Exiguobacterium</taxon>
    </lineage>
</organism>
<comment type="function">
    <text evidence="1">Located at the top of the head of the 30S subunit, it contacts several helices of the 16S rRNA. In the 70S ribosome it contacts the 23S rRNA (bridge B1a) and protein L5 of the 50S subunit (bridge B1b), connecting the 2 subunits; these bridges are implicated in subunit movement. Contacts the tRNAs in the A and P-sites.</text>
</comment>
<comment type="subunit">
    <text evidence="1">Part of the 30S ribosomal subunit. Forms a loose heterodimer with protein S19. Forms two bridges to the 50S subunit in the 70S ribosome.</text>
</comment>
<comment type="similarity">
    <text evidence="1">Belongs to the universal ribosomal protein uS13 family.</text>
</comment>